<proteinExistence type="evidence at transcript level"/>
<name>SP1L1_ARATH</name>
<accession>B3H4F1</accession>
<accession>Q9FZC2</accession>
<evidence type="ECO:0000250" key="1"/>
<evidence type="ECO:0000250" key="2">
    <source>
        <dbReference type="UniProtKB" id="Q9S7P8"/>
    </source>
</evidence>
<evidence type="ECO:0000256" key="3">
    <source>
        <dbReference type="SAM" id="MobiDB-lite"/>
    </source>
</evidence>
<evidence type="ECO:0000269" key="4">
    <source>
    </source>
</evidence>
<evidence type="ECO:0000305" key="5"/>
<keyword id="KW-0493">Microtubule</keyword>
<keyword id="KW-0597">Phosphoprotein</keyword>
<keyword id="KW-1185">Reference proteome</keyword>
<gene>
    <name type="primary">SP1L1</name>
    <name type="ordered locus">At1g26355</name>
    <name type="ORF">T1K7.26</name>
</gene>
<organism>
    <name type="scientific">Arabidopsis thaliana</name>
    <name type="common">Mouse-ear cress</name>
    <dbReference type="NCBI Taxonomy" id="3702"/>
    <lineage>
        <taxon>Eukaryota</taxon>
        <taxon>Viridiplantae</taxon>
        <taxon>Streptophyta</taxon>
        <taxon>Embryophyta</taxon>
        <taxon>Tracheophyta</taxon>
        <taxon>Spermatophyta</taxon>
        <taxon>Magnoliopsida</taxon>
        <taxon>eudicotyledons</taxon>
        <taxon>Gunneridae</taxon>
        <taxon>Pentapetalae</taxon>
        <taxon>rosids</taxon>
        <taxon>malvids</taxon>
        <taxon>Brassicales</taxon>
        <taxon>Brassicaceae</taxon>
        <taxon>Camelineae</taxon>
        <taxon>Arabidopsis</taxon>
    </lineage>
</organism>
<dbReference type="EMBL" id="AC013427">
    <property type="protein sequence ID" value="AAF98579.1"/>
    <property type="status" value="ALT_SEQ"/>
    <property type="molecule type" value="Genomic_DNA"/>
</dbReference>
<dbReference type="EMBL" id="CP002684">
    <property type="protein sequence ID" value="AEE30681.1"/>
    <property type="molecule type" value="Genomic_DNA"/>
</dbReference>
<dbReference type="PIR" id="C86390">
    <property type="entry name" value="C86390"/>
</dbReference>
<dbReference type="RefSeq" id="NP_001117356.1">
    <property type="nucleotide sequence ID" value="NM_001123884.2"/>
</dbReference>
<dbReference type="STRING" id="3702.B3H4F1"/>
<dbReference type="PaxDb" id="3702-AT1G26355.1"/>
<dbReference type="EnsemblPlants" id="AT1G26355.1">
    <property type="protein sequence ID" value="AT1G26355.1"/>
    <property type="gene ID" value="AT1G26355"/>
</dbReference>
<dbReference type="GeneID" id="6240366"/>
<dbReference type="Gramene" id="AT1G26355.1">
    <property type="protein sequence ID" value="AT1G26355.1"/>
    <property type="gene ID" value="AT1G26355"/>
</dbReference>
<dbReference type="KEGG" id="ath:AT1G26355"/>
<dbReference type="Araport" id="AT1G26355"/>
<dbReference type="TAIR" id="AT1G26355">
    <property type="gene designation" value="SP1L1"/>
</dbReference>
<dbReference type="eggNOG" id="ENOG502S4KK">
    <property type="taxonomic scope" value="Eukaryota"/>
</dbReference>
<dbReference type="HOGENOM" id="CLU_129558_0_0_1"/>
<dbReference type="InParanoid" id="B3H4F1"/>
<dbReference type="OMA" id="KLENMGR"/>
<dbReference type="OrthoDB" id="62622at2759"/>
<dbReference type="PhylomeDB" id="B3H4F1"/>
<dbReference type="PRO" id="PR:B3H4F1"/>
<dbReference type="Proteomes" id="UP000006548">
    <property type="component" value="Chromosome 1"/>
</dbReference>
<dbReference type="ExpressionAtlas" id="B3H4F1">
    <property type="expression patterns" value="baseline and differential"/>
</dbReference>
<dbReference type="GO" id="GO:0005874">
    <property type="term" value="C:microtubule"/>
    <property type="evidence" value="ECO:0007669"/>
    <property type="project" value="UniProtKB-KW"/>
</dbReference>
<dbReference type="GO" id="GO:0043622">
    <property type="term" value="P:cortical microtubule organization"/>
    <property type="evidence" value="ECO:0007669"/>
    <property type="project" value="InterPro"/>
</dbReference>
<dbReference type="InterPro" id="IPR039613">
    <property type="entry name" value="SPR1/2/3/4/5"/>
</dbReference>
<dbReference type="PANTHER" id="PTHR33403:SF31">
    <property type="entry name" value="PROTEIN SPIRAL1-LIKE 1"/>
    <property type="match status" value="1"/>
</dbReference>
<dbReference type="PANTHER" id="PTHR33403">
    <property type="entry name" value="SPR1"/>
    <property type="match status" value="1"/>
</dbReference>
<protein>
    <recommendedName>
        <fullName>Protein SPIRAL1-like 1</fullName>
    </recommendedName>
</protein>
<feature type="chain" id="PRO_0000417953" description="Protein SPIRAL1-like 1">
    <location>
        <begin position="1"/>
        <end position="113"/>
    </location>
</feature>
<feature type="region of interest" description="Disordered" evidence="3">
    <location>
        <begin position="1"/>
        <end position="50"/>
    </location>
</feature>
<feature type="region of interest" description="Disordered" evidence="3">
    <location>
        <begin position="79"/>
        <end position="113"/>
    </location>
</feature>
<feature type="compositionally biased region" description="Gly residues" evidence="3">
    <location>
        <begin position="1"/>
        <end position="12"/>
    </location>
</feature>
<feature type="compositionally biased region" description="Low complexity" evidence="3">
    <location>
        <begin position="23"/>
        <end position="34"/>
    </location>
</feature>
<feature type="compositionally biased region" description="Gly residues" evidence="3">
    <location>
        <begin position="97"/>
        <end position="113"/>
    </location>
</feature>
<feature type="modified residue" description="Phosphoserine" evidence="2">
    <location>
        <position position="69"/>
    </location>
</feature>
<reference key="1">
    <citation type="journal article" date="2000" name="Nature">
        <title>Sequence and analysis of chromosome 1 of the plant Arabidopsis thaliana.</title>
        <authorList>
            <person name="Theologis A."/>
            <person name="Ecker J.R."/>
            <person name="Palm C.J."/>
            <person name="Federspiel N.A."/>
            <person name="Kaul S."/>
            <person name="White O."/>
            <person name="Alonso J."/>
            <person name="Altafi H."/>
            <person name="Araujo R."/>
            <person name="Bowman C.L."/>
            <person name="Brooks S.Y."/>
            <person name="Buehler E."/>
            <person name="Chan A."/>
            <person name="Chao Q."/>
            <person name="Chen H."/>
            <person name="Cheuk R.F."/>
            <person name="Chin C.W."/>
            <person name="Chung M.K."/>
            <person name="Conn L."/>
            <person name="Conway A.B."/>
            <person name="Conway A.R."/>
            <person name="Creasy T.H."/>
            <person name="Dewar K."/>
            <person name="Dunn P."/>
            <person name="Etgu P."/>
            <person name="Feldblyum T.V."/>
            <person name="Feng J.-D."/>
            <person name="Fong B."/>
            <person name="Fujii C.Y."/>
            <person name="Gill J.E."/>
            <person name="Goldsmith A.D."/>
            <person name="Haas B."/>
            <person name="Hansen N.F."/>
            <person name="Hughes B."/>
            <person name="Huizar L."/>
            <person name="Hunter J.L."/>
            <person name="Jenkins J."/>
            <person name="Johnson-Hopson C."/>
            <person name="Khan S."/>
            <person name="Khaykin E."/>
            <person name="Kim C.J."/>
            <person name="Koo H.L."/>
            <person name="Kremenetskaia I."/>
            <person name="Kurtz D.B."/>
            <person name="Kwan A."/>
            <person name="Lam B."/>
            <person name="Langin-Hooper S."/>
            <person name="Lee A."/>
            <person name="Lee J.M."/>
            <person name="Lenz C.A."/>
            <person name="Li J.H."/>
            <person name="Li Y.-P."/>
            <person name="Lin X."/>
            <person name="Liu S.X."/>
            <person name="Liu Z.A."/>
            <person name="Luros J.S."/>
            <person name="Maiti R."/>
            <person name="Marziali A."/>
            <person name="Militscher J."/>
            <person name="Miranda M."/>
            <person name="Nguyen M."/>
            <person name="Nierman W.C."/>
            <person name="Osborne B.I."/>
            <person name="Pai G."/>
            <person name="Peterson J."/>
            <person name="Pham P.K."/>
            <person name="Rizzo M."/>
            <person name="Rooney T."/>
            <person name="Rowley D."/>
            <person name="Sakano H."/>
            <person name="Salzberg S.L."/>
            <person name="Schwartz J.R."/>
            <person name="Shinn P."/>
            <person name="Southwick A.M."/>
            <person name="Sun H."/>
            <person name="Tallon L.J."/>
            <person name="Tambunga G."/>
            <person name="Toriumi M.J."/>
            <person name="Town C.D."/>
            <person name="Utterback T."/>
            <person name="Van Aken S."/>
            <person name="Vaysberg M."/>
            <person name="Vysotskaia V.S."/>
            <person name="Walker M."/>
            <person name="Wu D."/>
            <person name="Yu G."/>
            <person name="Fraser C.M."/>
            <person name="Venter J.C."/>
            <person name="Davis R.W."/>
        </authorList>
    </citation>
    <scope>NUCLEOTIDE SEQUENCE [LARGE SCALE GENOMIC DNA]</scope>
    <source>
        <strain>cv. Columbia</strain>
    </source>
</reference>
<reference key="2">
    <citation type="journal article" date="2017" name="Plant J.">
        <title>Araport11: a complete reannotation of the Arabidopsis thaliana reference genome.</title>
        <authorList>
            <person name="Cheng C.Y."/>
            <person name="Krishnakumar V."/>
            <person name="Chan A.P."/>
            <person name="Thibaud-Nissen F."/>
            <person name="Schobel S."/>
            <person name="Town C.D."/>
        </authorList>
    </citation>
    <scope>GENOME REANNOTATION</scope>
    <source>
        <strain>cv. Columbia</strain>
    </source>
</reference>
<reference key="3">
    <citation type="book" date="2002" name="Proceedings of the 13th international conference on Arabidopsis research">
        <title>Functional analysis of SPIRAL1-LIKE genes.</title>
        <authorList>
            <person name="Nakajima K."/>
            <person name="Kawamura T."/>
            <person name="Furutani I."/>
            <person name="Hashimoto T."/>
        </authorList>
    </citation>
    <scope>GENE FAMILY</scope>
</reference>
<reference key="4">
    <citation type="journal article" date="2006" name="Plant Cell Physiol.">
        <title>Role of the SPIRAL1 gene family in anisotropic growth of Arabidopsis thaliana.</title>
        <authorList>
            <person name="Nakajima K."/>
            <person name="Kawamura T."/>
            <person name="Hashimoto T."/>
        </authorList>
    </citation>
    <scope>TISSUE SPECIFICITY</scope>
</reference>
<comment type="function">
    <text evidence="1">Acts redundantly with SPR1 in maintaining the cortical microtubules organization essential for anisotropic cell growth.</text>
</comment>
<comment type="tissue specificity">
    <text evidence="4">Detected in pollen of mature flowers.</text>
</comment>
<comment type="similarity">
    <text evidence="5">Belongs to the SPIRAL1 family.</text>
</comment>
<comment type="sequence caution" evidence="5">
    <conflict type="erroneous gene model prediction">
        <sequence resource="EMBL-CDS" id="AAF98579"/>
    </conflict>
    <text>The predicted gene has been split into 2 genes: At1g26355 and At1g26360.</text>
</comment>
<sequence length="113" mass="11268">MGRGVSVGGGQSSLGYLFGSGEAPKPAINNAPAPSSETLPISADPSPKHVAAQTVNVTKQIPAGINKSSTNNYIRADGQNTGNFLTDRPSTKVHAAPGGGSSLDYLFGGGGSN</sequence>